<organism>
    <name type="scientific">Staphylococcus aureus (strain USA300)</name>
    <dbReference type="NCBI Taxonomy" id="367830"/>
    <lineage>
        <taxon>Bacteria</taxon>
        <taxon>Bacillati</taxon>
        <taxon>Bacillota</taxon>
        <taxon>Bacilli</taxon>
        <taxon>Bacillales</taxon>
        <taxon>Staphylococcaceae</taxon>
        <taxon>Staphylococcus</taxon>
    </lineage>
</organism>
<evidence type="ECO:0000255" key="1">
    <source>
        <dbReference type="HAMAP-Rule" id="MF_00818"/>
    </source>
</evidence>
<name>QUEF_STAA3</name>
<reference key="1">
    <citation type="journal article" date="2006" name="Lancet">
        <title>Complete genome sequence of USA300, an epidemic clone of community-acquired meticillin-resistant Staphylococcus aureus.</title>
        <authorList>
            <person name="Diep B.A."/>
            <person name="Gill S.R."/>
            <person name="Chang R.F."/>
            <person name="Phan T.H."/>
            <person name="Chen J.H."/>
            <person name="Davidson M.G."/>
            <person name="Lin F."/>
            <person name="Lin J."/>
            <person name="Carleton H.A."/>
            <person name="Mongodin E.F."/>
            <person name="Sensabaugh G.F."/>
            <person name="Perdreau-Remington F."/>
        </authorList>
    </citation>
    <scope>NUCLEOTIDE SEQUENCE [LARGE SCALE GENOMIC DNA]</scope>
    <source>
        <strain>USA300</strain>
    </source>
</reference>
<keyword id="KW-0963">Cytoplasm</keyword>
<keyword id="KW-0521">NADP</keyword>
<keyword id="KW-0560">Oxidoreductase</keyword>
<keyword id="KW-0671">Queuosine biosynthesis</keyword>
<comment type="function">
    <text evidence="1">Catalyzes the NADPH-dependent reduction of 7-cyano-7-deazaguanine (preQ0) to 7-aminomethyl-7-deazaguanine (preQ1).</text>
</comment>
<comment type="catalytic activity">
    <reaction evidence="1">
        <text>7-aminomethyl-7-carbaguanine + 2 NADP(+) = 7-cyano-7-deazaguanine + 2 NADPH + 3 H(+)</text>
        <dbReference type="Rhea" id="RHEA:13409"/>
        <dbReference type="ChEBI" id="CHEBI:15378"/>
        <dbReference type="ChEBI" id="CHEBI:45075"/>
        <dbReference type="ChEBI" id="CHEBI:57783"/>
        <dbReference type="ChEBI" id="CHEBI:58349"/>
        <dbReference type="ChEBI" id="CHEBI:58703"/>
        <dbReference type="EC" id="1.7.1.13"/>
    </reaction>
</comment>
<comment type="pathway">
    <text evidence="1">tRNA modification; tRNA-queuosine biosynthesis.</text>
</comment>
<comment type="subcellular location">
    <subcellularLocation>
        <location evidence="1">Cytoplasm</location>
    </subcellularLocation>
</comment>
<comment type="similarity">
    <text evidence="1">Belongs to the GTP cyclohydrolase I family. QueF type 1 subfamily.</text>
</comment>
<protein>
    <recommendedName>
        <fullName evidence="1">NADPH-dependent 7-cyano-7-deazaguanine reductase</fullName>
        <ecNumber evidence="1">1.7.1.13</ecNumber>
    </recommendedName>
    <alternativeName>
        <fullName evidence="1">7-cyano-7-carbaguanine reductase</fullName>
    </alternativeName>
    <alternativeName>
        <fullName evidence="1">NADPH-dependent nitrile oxidoreductase</fullName>
    </alternativeName>
    <alternativeName>
        <fullName evidence="1">PreQ(0) reductase</fullName>
    </alternativeName>
</protein>
<accession>Q2FIR2</accession>
<sequence length="166" mass="19645">MAHGRQQDELQDITLLGNQDNTYNFDYRPDVLESFDNKHQGRDYFVKFNCPEFTSLCPITGQPDFATIYISYIPNVKMVESKSLKLYLFSFRNHGDFHEDCMNIIMNDLIELMDPHYIEVWGKFTPRGGISIDPYTNYGRPNSKYEKMAEHRLMNHDLYPEKIDNR</sequence>
<feature type="chain" id="PRO_0000247696" description="NADPH-dependent 7-cyano-7-deazaguanine reductase">
    <location>
        <begin position="1"/>
        <end position="166"/>
    </location>
</feature>
<feature type="active site" description="Thioimide intermediate" evidence="1">
    <location>
        <position position="57"/>
    </location>
</feature>
<feature type="active site" description="Proton donor" evidence="1">
    <location>
        <position position="64"/>
    </location>
</feature>
<feature type="binding site" evidence="1">
    <location>
        <begin position="79"/>
        <end position="81"/>
    </location>
    <ligand>
        <name>substrate</name>
    </ligand>
</feature>
<feature type="binding site" evidence="1">
    <location>
        <begin position="98"/>
        <end position="99"/>
    </location>
    <ligand>
        <name>substrate</name>
    </ligand>
</feature>
<dbReference type="EC" id="1.7.1.13" evidence="1"/>
<dbReference type="EMBL" id="CP000255">
    <property type="protein sequence ID" value="ABD21104.1"/>
    <property type="molecule type" value="Genomic_DNA"/>
</dbReference>
<dbReference type="RefSeq" id="WP_000930014.1">
    <property type="nucleotide sequence ID" value="NZ_CP027476.1"/>
</dbReference>
<dbReference type="SMR" id="Q2FIR2"/>
<dbReference type="KEGG" id="saa:SAUSA300_0713"/>
<dbReference type="HOGENOM" id="CLU_102489_0_1_9"/>
<dbReference type="OMA" id="KEFTSLC"/>
<dbReference type="UniPathway" id="UPA00392"/>
<dbReference type="Proteomes" id="UP000001939">
    <property type="component" value="Chromosome"/>
</dbReference>
<dbReference type="GO" id="GO:0005737">
    <property type="term" value="C:cytoplasm"/>
    <property type="evidence" value="ECO:0007669"/>
    <property type="project" value="UniProtKB-SubCell"/>
</dbReference>
<dbReference type="GO" id="GO:0033739">
    <property type="term" value="F:preQ1 synthase activity"/>
    <property type="evidence" value="ECO:0007669"/>
    <property type="project" value="UniProtKB-UniRule"/>
</dbReference>
<dbReference type="GO" id="GO:0008616">
    <property type="term" value="P:queuosine biosynthetic process"/>
    <property type="evidence" value="ECO:0007669"/>
    <property type="project" value="UniProtKB-UniRule"/>
</dbReference>
<dbReference type="GO" id="GO:0006400">
    <property type="term" value="P:tRNA modification"/>
    <property type="evidence" value="ECO:0007669"/>
    <property type="project" value="UniProtKB-UniRule"/>
</dbReference>
<dbReference type="Gene3D" id="3.30.1130.10">
    <property type="match status" value="1"/>
</dbReference>
<dbReference type="HAMAP" id="MF_00818">
    <property type="entry name" value="QueF_type1"/>
    <property type="match status" value="1"/>
</dbReference>
<dbReference type="InterPro" id="IPR043133">
    <property type="entry name" value="GTP-CH-I_C/QueF"/>
</dbReference>
<dbReference type="InterPro" id="IPR050084">
    <property type="entry name" value="NADPH_dep_7-cyano-7-deazaG_red"/>
</dbReference>
<dbReference type="InterPro" id="IPR029500">
    <property type="entry name" value="QueF"/>
</dbReference>
<dbReference type="InterPro" id="IPR016856">
    <property type="entry name" value="QueF_type1"/>
</dbReference>
<dbReference type="NCBIfam" id="TIGR03139">
    <property type="entry name" value="QueF-II"/>
    <property type="match status" value="1"/>
</dbReference>
<dbReference type="PANTHER" id="PTHR34354">
    <property type="entry name" value="NADPH-DEPENDENT 7-CYANO-7-DEAZAGUANINE REDUCTASE"/>
    <property type="match status" value="1"/>
</dbReference>
<dbReference type="PANTHER" id="PTHR34354:SF1">
    <property type="entry name" value="NADPH-DEPENDENT 7-CYANO-7-DEAZAGUANINE REDUCTASE"/>
    <property type="match status" value="1"/>
</dbReference>
<dbReference type="Pfam" id="PF14489">
    <property type="entry name" value="QueF"/>
    <property type="match status" value="1"/>
</dbReference>
<dbReference type="PIRSF" id="PIRSF027377">
    <property type="entry name" value="Nitrile_oxidored_QueF"/>
    <property type="match status" value="1"/>
</dbReference>
<dbReference type="SUPFAM" id="SSF55620">
    <property type="entry name" value="Tetrahydrobiopterin biosynthesis enzymes-like"/>
    <property type="match status" value="1"/>
</dbReference>
<gene>
    <name evidence="1" type="primary">queF</name>
    <name type="ordered locus">SAUSA300_0713</name>
</gene>
<proteinExistence type="inferred from homology"/>